<feature type="chain" id="PRO_1000018283" description="Tryptophan synthase alpha chain">
    <location>
        <begin position="1"/>
        <end position="268"/>
    </location>
</feature>
<feature type="active site" description="Proton acceptor" evidence="1">
    <location>
        <position position="49"/>
    </location>
</feature>
<feature type="active site" description="Proton acceptor" evidence="1">
    <location>
        <position position="60"/>
    </location>
</feature>
<protein>
    <recommendedName>
        <fullName evidence="1">Tryptophan synthase alpha chain</fullName>
        <ecNumber evidence="1">4.2.1.20</ecNumber>
    </recommendedName>
</protein>
<gene>
    <name evidence="1" type="primary">trpA</name>
    <name type="ordered locus">SSON_1883</name>
</gene>
<evidence type="ECO:0000255" key="1">
    <source>
        <dbReference type="HAMAP-Rule" id="MF_00131"/>
    </source>
</evidence>
<dbReference type="EC" id="4.2.1.20" evidence="1"/>
<dbReference type="EMBL" id="CP000038">
    <property type="protein sequence ID" value="AAZ88554.1"/>
    <property type="molecule type" value="Genomic_DNA"/>
</dbReference>
<dbReference type="RefSeq" id="WP_000443058.1">
    <property type="nucleotide sequence ID" value="NC_007384.1"/>
</dbReference>
<dbReference type="SMR" id="Q3Z108"/>
<dbReference type="GeneID" id="93775379"/>
<dbReference type="KEGG" id="ssn:SSON_1883"/>
<dbReference type="HOGENOM" id="CLU_016734_0_4_6"/>
<dbReference type="UniPathway" id="UPA00035">
    <property type="reaction ID" value="UER00044"/>
</dbReference>
<dbReference type="Proteomes" id="UP000002529">
    <property type="component" value="Chromosome"/>
</dbReference>
<dbReference type="GO" id="GO:0005829">
    <property type="term" value="C:cytosol"/>
    <property type="evidence" value="ECO:0007669"/>
    <property type="project" value="TreeGrafter"/>
</dbReference>
<dbReference type="GO" id="GO:0004834">
    <property type="term" value="F:tryptophan synthase activity"/>
    <property type="evidence" value="ECO:0007669"/>
    <property type="project" value="UniProtKB-UniRule"/>
</dbReference>
<dbReference type="CDD" id="cd04724">
    <property type="entry name" value="Tryptophan_synthase_alpha"/>
    <property type="match status" value="1"/>
</dbReference>
<dbReference type="FunFam" id="3.20.20.70:FF:000037">
    <property type="entry name" value="Tryptophan synthase alpha chain"/>
    <property type="match status" value="1"/>
</dbReference>
<dbReference type="Gene3D" id="3.20.20.70">
    <property type="entry name" value="Aldolase class I"/>
    <property type="match status" value="1"/>
</dbReference>
<dbReference type="HAMAP" id="MF_00131">
    <property type="entry name" value="Trp_synth_alpha"/>
    <property type="match status" value="1"/>
</dbReference>
<dbReference type="InterPro" id="IPR013785">
    <property type="entry name" value="Aldolase_TIM"/>
</dbReference>
<dbReference type="InterPro" id="IPR011060">
    <property type="entry name" value="RibuloseP-bd_barrel"/>
</dbReference>
<dbReference type="InterPro" id="IPR018204">
    <property type="entry name" value="Trp_synthase_alpha_AS"/>
</dbReference>
<dbReference type="InterPro" id="IPR002028">
    <property type="entry name" value="Trp_synthase_suA"/>
</dbReference>
<dbReference type="NCBIfam" id="TIGR00262">
    <property type="entry name" value="trpA"/>
    <property type="match status" value="1"/>
</dbReference>
<dbReference type="PANTHER" id="PTHR43406:SF1">
    <property type="entry name" value="TRYPTOPHAN SYNTHASE ALPHA CHAIN, CHLOROPLASTIC"/>
    <property type="match status" value="1"/>
</dbReference>
<dbReference type="PANTHER" id="PTHR43406">
    <property type="entry name" value="TRYPTOPHAN SYNTHASE, ALPHA CHAIN"/>
    <property type="match status" value="1"/>
</dbReference>
<dbReference type="Pfam" id="PF00290">
    <property type="entry name" value="Trp_syntA"/>
    <property type="match status" value="1"/>
</dbReference>
<dbReference type="SUPFAM" id="SSF51366">
    <property type="entry name" value="Ribulose-phoshate binding barrel"/>
    <property type="match status" value="1"/>
</dbReference>
<dbReference type="PROSITE" id="PS00167">
    <property type="entry name" value="TRP_SYNTHASE_ALPHA"/>
    <property type="match status" value="1"/>
</dbReference>
<accession>Q3Z108</accession>
<sequence>MERYESLFAQLKERKEGAFVPFVTLGDPGIEQSLKIIDTLIEAGADALELGIPFSDPLADGPTIQNATLRAFAAGVTPAQCFEMLALIRQKHPTIPIGLLMYANLVFNKGIDEFYAQCEKVGVDSVLVADVPIEESAPFRQAALRHNVAPIFICPPNADDDLLRQIASYGRGYTYLLSRAGVTGAENRAALPLNHLVAKLKEYNAAPPLQGFGISTPDQVKAAIDAGAAGAISGSAIVKIIEQHINEPEKMLAALKVFVQPMKVATRS</sequence>
<reference key="1">
    <citation type="journal article" date="2005" name="Nucleic Acids Res.">
        <title>Genome dynamics and diversity of Shigella species, the etiologic agents of bacillary dysentery.</title>
        <authorList>
            <person name="Yang F."/>
            <person name="Yang J."/>
            <person name="Zhang X."/>
            <person name="Chen L."/>
            <person name="Jiang Y."/>
            <person name="Yan Y."/>
            <person name="Tang X."/>
            <person name="Wang J."/>
            <person name="Xiong Z."/>
            <person name="Dong J."/>
            <person name="Xue Y."/>
            <person name="Zhu Y."/>
            <person name="Xu X."/>
            <person name="Sun L."/>
            <person name="Chen S."/>
            <person name="Nie H."/>
            <person name="Peng J."/>
            <person name="Xu J."/>
            <person name="Wang Y."/>
            <person name="Yuan Z."/>
            <person name="Wen Y."/>
            <person name="Yao Z."/>
            <person name="Shen Y."/>
            <person name="Qiang B."/>
            <person name="Hou Y."/>
            <person name="Yu J."/>
            <person name="Jin Q."/>
        </authorList>
    </citation>
    <scope>NUCLEOTIDE SEQUENCE [LARGE SCALE GENOMIC DNA]</scope>
    <source>
        <strain>Ss046</strain>
    </source>
</reference>
<name>TRPA_SHISS</name>
<organism>
    <name type="scientific">Shigella sonnei (strain Ss046)</name>
    <dbReference type="NCBI Taxonomy" id="300269"/>
    <lineage>
        <taxon>Bacteria</taxon>
        <taxon>Pseudomonadati</taxon>
        <taxon>Pseudomonadota</taxon>
        <taxon>Gammaproteobacteria</taxon>
        <taxon>Enterobacterales</taxon>
        <taxon>Enterobacteriaceae</taxon>
        <taxon>Shigella</taxon>
    </lineage>
</organism>
<proteinExistence type="inferred from homology"/>
<keyword id="KW-0028">Amino-acid biosynthesis</keyword>
<keyword id="KW-0057">Aromatic amino acid biosynthesis</keyword>
<keyword id="KW-0456">Lyase</keyword>
<keyword id="KW-1185">Reference proteome</keyword>
<keyword id="KW-0822">Tryptophan biosynthesis</keyword>
<comment type="function">
    <text evidence="1">The alpha subunit is responsible for the aldol cleavage of indoleglycerol phosphate to indole and glyceraldehyde 3-phosphate.</text>
</comment>
<comment type="catalytic activity">
    <reaction evidence="1">
        <text>(1S,2R)-1-C-(indol-3-yl)glycerol 3-phosphate + L-serine = D-glyceraldehyde 3-phosphate + L-tryptophan + H2O</text>
        <dbReference type="Rhea" id="RHEA:10532"/>
        <dbReference type="ChEBI" id="CHEBI:15377"/>
        <dbReference type="ChEBI" id="CHEBI:33384"/>
        <dbReference type="ChEBI" id="CHEBI:57912"/>
        <dbReference type="ChEBI" id="CHEBI:58866"/>
        <dbReference type="ChEBI" id="CHEBI:59776"/>
        <dbReference type="EC" id="4.2.1.20"/>
    </reaction>
</comment>
<comment type="pathway">
    <text evidence="1">Amino-acid biosynthesis; L-tryptophan biosynthesis; L-tryptophan from chorismate: step 5/5.</text>
</comment>
<comment type="subunit">
    <text evidence="1">Tetramer of two alpha and two beta chains.</text>
</comment>
<comment type="similarity">
    <text evidence="1">Belongs to the TrpA family.</text>
</comment>